<keyword id="KW-0067">ATP-binding</keyword>
<keyword id="KW-0963">Cytoplasm</keyword>
<keyword id="KW-0436">Ligase</keyword>
<keyword id="KW-0547">Nucleotide-binding</keyword>
<keyword id="KW-1185">Reference proteome</keyword>
<keyword id="KW-0819">tRNA processing</keyword>
<evidence type="ECO:0000255" key="1">
    <source>
        <dbReference type="HAMAP-Rule" id="MF_01161"/>
    </source>
</evidence>
<comment type="function">
    <text evidence="1">Ligates lysine onto the cytidine present at position 34 of the AUA codon-specific tRNA(Ile) that contains the anticodon CAU, in an ATP-dependent manner. Cytidine is converted to lysidine, thus changing the amino acid specificity of the tRNA from methionine to isoleucine.</text>
</comment>
<comment type="catalytic activity">
    <reaction evidence="1">
        <text>cytidine(34) in tRNA(Ile2) + L-lysine + ATP = lysidine(34) in tRNA(Ile2) + AMP + diphosphate + H(+)</text>
        <dbReference type="Rhea" id="RHEA:43744"/>
        <dbReference type="Rhea" id="RHEA-COMP:10625"/>
        <dbReference type="Rhea" id="RHEA-COMP:10670"/>
        <dbReference type="ChEBI" id="CHEBI:15378"/>
        <dbReference type="ChEBI" id="CHEBI:30616"/>
        <dbReference type="ChEBI" id="CHEBI:32551"/>
        <dbReference type="ChEBI" id="CHEBI:33019"/>
        <dbReference type="ChEBI" id="CHEBI:82748"/>
        <dbReference type="ChEBI" id="CHEBI:83665"/>
        <dbReference type="ChEBI" id="CHEBI:456215"/>
        <dbReference type="EC" id="6.3.4.19"/>
    </reaction>
</comment>
<comment type="subcellular location">
    <subcellularLocation>
        <location evidence="1">Cytoplasm</location>
    </subcellularLocation>
</comment>
<comment type="domain">
    <text>The N-terminal region contains the highly conserved SGGXDS motif, predicted to be a P-loop motif involved in ATP binding.</text>
</comment>
<comment type="similarity">
    <text evidence="1">Belongs to the tRNA(Ile)-lysidine synthase family.</text>
</comment>
<proteinExistence type="inferred from homology"/>
<protein>
    <recommendedName>
        <fullName evidence="1">tRNA(Ile)-lysidine synthase</fullName>
        <ecNumber evidence="1">6.3.4.19</ecNumber>
    </recommendedName>
    <alternativeName>
        <fullName evidence="1">tRNA(Ile)-2-lysyl-cytidine synthase</fullName>
    </alternativeName>
    <alternativeName>
        <fullName evidence="1">tRNA(Ile)-lysidine synthetase</fullName>
    </alternativeName>
</protein>
<gene>
    <name evidence="1" type="primary">tilS</name>
    <name type="ordered locus">CT1614</name>
</gene>
<sequence length="331" mass="37135">MNKTEKKFLENMHRQKLVANGDAVLLAVSGGPDSMALLHLFASVASVLHCRLGVAHCNFMLRGDASDADESFVRDACAELGIDFHVRRFDTASVSSAWKKSIEETARLLRYDFFGELCREASYTRIATGHHSDDNAETVLFNLFRGAGISGLRGIRVRHGAIIRPLLPFTRREIVAYLEEKRVVWRDDHTNEGIEYDRNFIRNRVIPVIEERFAHKLMPSLQRISEHAGELEEFIDLHISRLLEAHPGLDLAGGKLHVGTMRQLSMFERKEILKRALKLQGLSVGSNVLNRIAGLLDNQAGRSVPAGAGVEVVLHDGFLRFRQTGNPSDHR</sequence>
<reference key="1">
    <citation type="journal article" date="2000" name="Science">
        <title>Molecular evidence for the early evolution of photosynthesis.</title>
        <authorList>
            <person name="Xiong J."/>
            <person name="Fischer W.M."/>
            <person name="Inoue K."/>
            <person name="Nakahara M."/>
            <person name="Bauer C.E."/>
        </authorList>
    </citation>
    <scope>NUCLEOTIDE SEQUENCE [GENOMIC DNA]</scope>
</reference>
<reference key="2">
    <citation type="journal article" date="2002" name="Proc. Natl. Acad. Sci. U.S.A.">
        <title>The complete genome sequence of Chlorobium tepidum TLS, a photosynthetic, anaerobic, green-sulfur bacterium.</title>
        <authorList>
            <person name="Eisen J.A."/>
            <person name="Nelson K.E."/>
            <person name="Paulsen I.T."/>
            <person name="Heidelberg J.F."/>
            <person name="Wu M."/>
            <person name="Dodson R.J."/>
            <person name="DeBoy R.T."/>
            <person name="Gwinn M.L."/>
            <person name="Nelson W.C."/>
            <person name="Haft D.H."/>
            <person name="Hickey E.K."/>
            <person name="Peterson J.D."/>
            <person name="Durkin A.S."/>
            <person name="Kolonay J.F."/>
            <person name="Yang F."/>
            <person name="Holt I.E."/>
            <person name="Umayam L.A."/>
            <person name="Mason T.M."/>
            <person name="Brenner M."/>
            <person name="Shea T.P."/>
            <person name="Parksey D.S."/>
            <person name="Nierman W.C."/>
            <person name="Feldblyum T.V."/>
            <person name="Hansen C.L."/>
            <person name="Craven M.B."/>
            <person name="Radune D."/>
            <person name="Vamathevan J.J."/>
            <person name="Khouri H.M."/>
            <person name="White O."/>
            <person name="Gruber T.M."/>
            <person name="Ketchum K.A."/>
            <person name="Venter J.C."/>
            <person name="Tettelin H."/>
            <person name="Bryant D.A."/>
            <person name="Fraser C.M."/>
        </authorList>
    </citation>
    <scope>NUCLEOTIDE SEQUENCE [LARGE SCALE GENOMIC DNA]</scope>
    <source>
        <strain>ATCC 49652 / DSM 12025 / NBRC 103806 / TLS</strain>
    </source>
</reference>
<dbReference type="EC" id="6.3.4.19" evidence="1"/>
<dbReference type="EMBL" id="AY005137">
    <property type="protein sequence ID" value="AAG12421.1"/>
    <property type="molecule type" value="Genomic_DNA"/>
</dbReference>
<dbReference type="EMBL" id="AE006470">
    <property type="protein sequence ID" value="AAM72839.1"/>
    <property type="molecule type" value="Genomic_DNA"/>
</dbReference>
<dbReference type="RefSeq" id="NP_662497.1">
    <property type="nucleotide sequence ID" value="NC_002932.3"/>
</dbReference>
<dbReference type="RefSeq" id="WP_010933278.1">
    <property type="nucleotide sequence ID" value="NC_002932.3"/>
</dbReference>
<dbReference type="SMR" id="Q8KC15"/>
<dbReference type="STRING" id="194439.CT1614"/>
<dbReference type="EnsemblBacteria" id="AAM72839">
    <property type="protein sequence ID" value="AAM72839"/>
    <property type="gene ID" value="CT1614"/>
</dbReference>
<dbReference type="KEGG" id="cte:CT1614"/>
<dbReference type="PATRIC" id="fig|194439.7.peg.1459"/>
<dbReference type="eggNOG" id="COG0037">
    <property type="taxonomic scope" value="Bacteria"/>
</dbReference>
<dbReference type="HOGENOM" id="CLU_018869_0_0_10"/>
<dbReference type="OrthoDB" id="9807403at2"/>
<dbReference type="Proteomes" id="UP000001007">
    <property type="component" value="Chromosome"/>
</dbReference>
<dbReference type="GO" id="GO:0005737">
    <property type="term" value="C:cytoplasm"/>
    <property type="evidence" value="ECO:0007669"/>
    <property type="project" value="UniProtKB-SubCell"/>
</dbReference>
<dbReference type="GO" id="GO:0005524">
    <property type="term" value="F:ATP binding"/>
    <property type="evidence" value="ECO:0007669"/>
    <property type="project" value="UniProtKB-UniRule"/>
</dbReference>
<dbReference type="GO" id="GO:0032267">
    <property type="term" value="F:tRNA(Ile)-lysidine synthase activity"/>
    <property type="evidence" value="ECO:0007669"/>
    <property type="project" value="UniProtKB-EC"/>
</dbReference>
<dbReference type="GO" id="GO:0006400">
    <property type="term" value="P:tRNA modification"/>
    <property type="evidence" value="ECO:0007669"/>
    <property type="project" value="UniProtKB-UniRule"/>
</dbReference>
<dbReference type="CDD" id="cd01992">
    <property type="entry name" value="TilS_N"/>
    <property type="match status" value="1"/>
</dbReference>
<dbReference type="Gene3D" id="3.40.50.620">
    <property type="entry name" value="HUPs"/>
    <property type="match status" value="1"/>
</dbReference>
<dbReference type="HAMAP" id="MF_01161">
    <property type="entry name" value="tRNA_Ile_lys_synt"/>
    <property type="match status" value="1"/>
</dbReference>
<dbReference type="InterPro" id="IPR014729">
    <property type="entry name" value="Rossmann-like_a/b/a_fold"/>
</dbReference>
<dbReference type="InterPro" id="IPR011063">
    <property type="entry name" value="TilS/TtcA_N"/>
</dbReference>
<dbReference type="InterPro" id="IPR012094">
    <property type="entry name" value="tRNA_Ile_lys_synt"/>
</dbReference>
<dbReference type="InterPro" id="IPR012795">
    <property type="entry name" value="tRNA_Ile_lys_synt_N"/>
</dbReference>
<dbReference type="NCBIfam" id="TIGR02432">
    <property type="entry name" value="lysidine_TilS_N"/>
    <property type="match status" value="1"/>
</dbReference>
<dbReference type="PANTHER" id="PTHR43033">
    <property type="entry name" value="TRNA(ILE)-LYSIDINE SYNTHASE-RELATED"/>
    <property type="match status" value="1"/>
</dbReference>
<dbReference type="PANTHER" id="PTHR43033:SF1">
    <property type="entry name" value="TRNA(ILE)-LYSIDINE SYNTHASE-RELATED"/>
    <property type="match status" value="1"/>
</dbReference>
<dbReference type="Pfam" id="PF01171">
    <property type="entry name" value="ATP_bind_3"/>
    <property type="match status" value="1"/>
</dbReference>
<dbReference type="SUPFAM" id="SSF52402">
    <property type="entry name" value="Adenine nucleotide alpha hydrolases-like"/>
    <property type="match status" value="1"/>
</dbReference>
<feature type="chain" id="PRO_0000181676" description="tRNA(Ile)-lysidine synthase">
    <location>
        <begin position="1"/>
        <end position="331"/>
    </location>
</feature>
<feature type="binding site" evidence="1">
    <location>
        <begin position="29"/>
        <end position="34"/>
    </location>
    <ligand>
        <name>ATP</name>
        <dbReference type="ChEBI" id="CHEBI:30616"/>
    </ligand>
</feature>
<name>TILS_CHLTE</name>
<accession>Q8KC15</accession>
<accession>Q93SU5</accession>
<organism>
    <name type="scientific">Chlorobaculum tepidum (strain ATCC 49652 / DSM 12025 / NBRC 103806 / TLS)</name>
    <name type="common">Chlorobium tepidum</name>
    <dbReference type="NCBI Taxonomy" id="194439"/>
    <lineage>
        <taxon>Bacteria</taxon>
        <taxon>Pseudomonadati</taxon>
        <taxon>Chlorobiota</taxon>
        <taxon>Chlorobiia</taxon>
        <taxon>Chlorobiales</taxon>
        <taxon>Chlorobiaceae</taxon>
        <taxon>Chlorobaculum</taxon>
    </lineage>
</organism>